<feature type="chain" id="PRO_1000056989" description="DNA gyrase inhibitor YacG">
    <location>
        <begin position="1"/>
        <end position="69"/>
    </location>
</feature>
<feature type="binding site" evidence="1">
    <location>
        <position position="7"/>
    </location>
    <ligand>
        <name>Zn(2+)</name>
        <dbReference type="ChEBI" id="CHEBI:29105"/>
    </ligand>
</feature>
<feature type="binding site" evidence="1">
    <location>
        <position position="10"/>
    </location>
    <ligand>
        <name>Zn(2+)</name>
        <dbReference type="ChEBI" id="CHEBI:29105"/>
    </ligand>
</feature>
<feature type="binding site" evidence="1">
    <location>
        <position position="26"/>
    </location>
    <ligand>
        <name>Zn(2+)</name>
        <dbReference type="ChEBI" id="CHEBI:29105"/>
    </ligand>
</feature>
<feature type="binding site" evidence="1">
    <location>
        <position position="30"/>
    </location>
    <ligand>
        <name>Zn(2+)</name>
        <dbReference type="ChEBI" id="CHEBI:29105"/>
    </ligand>
</feature>
<accession>A3D9I1</accession>
<dbReference type="EMBL" id="CP000563">
    <property type="protein sequence ID" value="ABN63394.1"/>
    <property type="molecule type" value="Genomic_DNA"/>
</dbReference>
<dbReference type="RefSeq" id="WP_011848010.1">
    <property type="nucleotide sequence ID" value="NC_009052.1"/>
</dbReference>
<dbReference type="SMR" id="A3D9I1"/>
<dbReference type="STRING" id="325240.Sbal_3924"/>
<dbReference type="KEGG" id="sbl:Sbal_3924"/>
<dbReference type="HOGENOM" id="CLU_178280_3_2_6"/>
<dbReference type="OrthoDB" id="9809663at2"/>
<dbReference type="Proteomes" id="UP000001557">
    <property type="component" value="Chromosome"/>
</dbReference>
<dbReference type="GO" id="GO:0008657">
    <property type="term" value="F:DNA topoisomerase type II (double strand cut, ATP-hydrolyzing) inhibitor activity"/>
    <property type="evidence" value="ECO:0007669"/>
    <property type="project" value="UniProtKB-UniRule"/>
</dbReference>
<dbReference type="GO" id="GO:0008270">
    <property type="term" value="F:zinc ion binding"/>
    <property type="evidence" value="ECO:0007669"/>
    <property type="project" value="UniProtKB-UniRule"/>
</dbReference>
<dbReference type="GO" id="GO:0006355">
    <property type="term" value="P:regulation of DNA-templated transcription"/>
    <property type="evidence" value="ECO:0007669"/>
    <property type="project" value="InterPro"/>
</dbReference>
<dbReference type="Gene3D" id="3.30.50.10">
    <property type="entry name" value="Erythroid Transcription Factor GATA-1, subunit A"/>
    <property type="match status" value="1"/>
</dbReference>
<dbReference type="HAMAP" id="MF_00649">
    <property type="entry name" value="DNA_gyrase_inhibitor_YacG"/>
    <property type="match status" value="1"/>
</dbReference>
<dbReference type="InterPro" id="IPR005584">
    <property type="entry name" value="DNA_gyrase_inhibitor_YacG"/>
</dbReference>
<dbReference type="InterPro" id="IPR013088">
    <property type="entry name" value="Znf_NHR/GATA"/>
</dbReference>
<dbReference type="NCBIfam" id="NF001638">
    <property type="entry name" value="PRK00418.1"/>
    <property type="match status" value="1"/>
</dbReference>
<dbReference type="PANTHER" id="PTHR36150">
    <property type="entry name" value="DNA GYRASE INHIBITOR YACG"/>
    <property type="match status" value="1"/>
</dbReference>
<dbReference type="PANTHER" id="PTHR36150:SF1">
    <property type="entry name" value="DNA GYRASE INHIBITOR YACG"/>
    <property type="match status" value="1"/>
</dbReference>
<dbReference type="Pfam" id="PF03884">
    <property type="entry name" value="YacG"/>
    <property type="match status" value="1"/>
</dbReference>
<dbReference type="SUPFAM" id="SSF57716">
    <property type="entry name" value="Glucocorticoid receptor-like (DNA-binding domain)"/>
    <property type="match status" value="1"/>
</dbReference>
<organism>
    <name type="scientific">Shewanella baltica (strain OS155 / ATCC BAA-1091)</name>
    <dbReference type="NCBI Taxonomy" id="325240"/>
    <lineage>
        <taxon>Bacteria</taxon>
        <taxon>Pseudomonadati</taxon>
        <taxon>Pseudomonadota</taxon>
        <taxon>Gammaproteobacteria</taxon>
        <taxon>Alteromonadales</taxon>
        <taxon>Shewanellaceae</taxon>
        <taxon>Shewanella</taxon>
    </lineage>
</organism>
<evidence type="ECO:0000255" key="1">
    <source>
        <dbReference type="HAMAP-Rule" id="MF_00649"/>
    </source>
</evidence>
<name>YACG_SHEB5</name>
<keyword id="KW-0479">Metal-binding</keyword>
<keyword id="KW-1185">Reference proteome</keyword>
<keyword id="KW-0862">Zinc</keyword>
<protein>
    <recommendedName>
        <fullName evidence="1">DNA gyrase inhibitor YacG</fullName>
    </recommendedName>
</protein>
<reference key="1">
    <citation type="submission" date="2007-02" db="EMBL/GenBank/DDBJ databases">
        <title>Complete sequence of chromosome of Shewanella baltica OS155.</title>
        <authorList>
            <consortium name="US DOE Joint Genome Institute"/>
            <person name="Copeland A."/>
            <person name="Lucas S."/>
            <person name="Lapidus A."/>
            <person name="Barry K."/>
            <person name="Detter J.C."/>
            <person name="Glavina del Rio T."/>
            <person name="Hammon N."/>
            <person name="Israni S."/>
            <person name="Dalin E."/>
            <person name="Tice H."/>
            <person name="Pitluck S."/>
            <person name="Sims D.R."/>
            <person name="Brettin T."/>
            <person name="Bruce D."/>
            <person name="Han C."/>
            <person name="Tapia R."/>
            <person name="Brainard J."/>
            <person name="Schmutz J."/>
            <person name="Larimer F."/>
            <person name="Land M."/>
            <person name="Hauser L."/>
            <person name="Kyrpides N."/>
            <person name="Mikhailova N."/>
            <person name="Brettar I."/>
            <person name="Klappenbach J."/>
            <person name="Konstantinidis K."/>
            <person name="Rodrigues J."/>
            <person name="Tiedje J."/>
            <person name="Richardson P."/>
        </authorList>
    </citation>
    <scope>NUCLEOTIDE SEQUENCE [LARGE SCALE GENOMIC DNA]</scope>
    <source>
        <strain>OS155 / ATCC BAA-1091</strain>
    </source>
</reference>
<comment type="function">
    <text evidence="1">Inhibits all the catalytic activities of DNA gyrase by preventing its interaction with DNA. Acts by binding directly to the C-terminal domain of GyrB, which probably disrupts DNA binding by the gyrase.</text>
</comment>
<comment type="cofactor">
    <cofactor evidence="1">
        <name>Zn(2+)</name>
        <dbReference type="ChEBI" id="CHEBI:29105"/>
    </cofactor>
    <text evidence="1">Binds 1 zinc ion.</text>
</comment>
<comment type="subunit">
    <text evidence="1">Interacts with GyrB.</text>
</comment>
<comment type="similarity">
    <text evidence="1">Belongs to the DNA gyrase inhibitor YacG family.</text>
</comment>
<sequence length="69" mass="7921">MPLTVKCPICKAPVEWVPQSAFKPFCSERCKLIDLGDWASEKHVIPVKAEFDPEAFDEFDLDEGDFFKE</sequence>
<proteinExistence type="inferred from homology"/>
<gene>
    <name evidence="1" type="primary">yacG</name>
    <name type="ordered locus">Sbal_3924</name>
</gene>